<comment type="function">
    <text evidence="7">Involved in the export of the LtxA leukotoxin.</text>
</comment>
<comment type="subunit">
    <text evidence="4">Probably part of a complex composed of LtxB, LtxD and TdeA, which forms a single transport channel across the two membranes.</text>
</comment>
<comment type="subcellular location">
    <subcellularLocation>
        <location evidence="9">Cell inner membrane</location>
        <topology evidence="1">Single-pass membrane protein</topology>
    </subcellularLocation>
</comment>
<comment type="induction">
    <text evidence="3">Levels of toxin expression vary greatly among strains. Highly leukotoxic strains (JP2-type strains) produce more LtxA protein and ltx mRNA than minimally leukotoxic strains (652-type strains). Variations are probably due to different types of promoters.</text>
</comment>
<comment type="disruption phenotype">
    <text evidence="2">Mutation has no effect on the levels of leukotoxin mRNA, but mutants have significantly less total leukotoxin than the parent strain.</text>
</comment>
<comment type="similarity">
    <text evidence="9">Belongs to the membrane fusion protein (MFP) (TC 8.A.1) family.</text>
</comment>
<accession>P18790</accession>
<gene>
    <name evidence="8" type="primary">ltxD</name>
    <name evidence="5" type="synonym">AaLtd</name>
    <name evidence="6" type="synonym">lktD</name>
</gene>
<dbReference type="EMBL" id="X53956">
    <property type="protein sequence ID" value="CAA37907.1"/>
    <property type="molecule type" value="Genomic_DNA"/>
</dbReference>
<dbReference type="PIR" id="B61378">
    <property type="entry name" value="B61378"/>
</dbReference>
<dbReference type="RefSeq" id="WP_025298516.1">
    <property type="nucleotide sequence ID" value="NZ_JABKAK010000001.1"/>
</dbReference>
<dbReference type="SMR" id="P18790"/>
<dbReference type="STRING" id="714.ACT75_09615"/>
<dbReference type="TCDB" id="8.A.1.3.4">
    <property type="family name" value="the membrane fusion protein (mfp) family"/>
</dbReference>
<dbReference type="eggNOG" id="COG0845">
    <property type="taxonomic scope" value="Bacteria"/>
</dbReference>
<dbReference type="GO" id="GO:0005886">
    <property type="term" value="C:plasma membrane"/>
    <property type="evidence" value="ECO:0007669"/>
    <property type="project" value="UniProtKB-SubCell"/>
</dbReference>
<dbReference type="GO" id="GO:0009306">
    <property type="term" value="P:protein secretion"/>
    <property type="evidence" value="ECO:0007669"/>
    <property type="project" value="InterPro"/>
</dbReference>
<dbReference type="GO" id="GO:0055085">
    <property type="term" value="P:transmembrane transport"/>
    <property type="evidence" value="ECO:0007669"/>
    <property type="project" value="InterPro"/>
</dbReference>
<dbReference type="Gene3D" id="2.40.30.170">
    <property type="match status" value="1"/>
</dbReference>
<dbReference type="Gene3D" id="2.40.50.100">
    <property type="match status" value="1"/>
</dbReference>
<dbReference type="InterPro" id="IPR050739">
    <property type="entry name" value="MFP"/>
</dbReference>
<dbReference type="InterPro" id="IPR006144">
    <property type="entry name" value="Secretion_HlyD_CS"/>
</dbReference>
<dbReference type="InterPro" id="IPR010129">
    <property type="entry name" value="T1SS_HlyD"/>
</dbReference>
<dbReference type="NCBIfam" id="TIGR01843">
    <property type="entry name" value="type_I_hlyD"/>
    <property type="match status" value="1"/>
</dbReference>
<dbReference type="PANTHER" id="PTHR30386:SF27">
    <property type="entry name" value="MEMBRANE FUSION PROTEIN (MFP) FAMILY PROTEIN"/>
    <property type="match status" value="1"/>
</dbReference>
<dbReference type="PANTHER" id="PTHR30386">
    <property type="entry name" value="MEMBRANE FUSION SUBUNIT OF EMRAB-TOLC MULTIDRUG EFFLUX PUMP"/>
    <property type="match status" value="1"/>
</dbReference>
<dbReference type="Pfam" id="PF13437">
    <property type="entry name" value="HlyD_3"/>
    <property type="match status" value="1"/>
</dbReference>
<dbReference type="PRINTS" id="PR01490">
    <property type="entry name" value="RTXTOXIND"/>
</dbReference>
<dbReference type="SUPFAM" id="SSF111369">
    <property type="entry name" value="HlyD-like secretion proteins"/>
    <property type="match status" value="1"/>
</dbReference>
<dbReference type="PROSITE" id="PS00543">
    <property type="entry name" value="HLYD_FAMILY"/>
    <property type="match status" value="1"/>
</dbReference>
<organism>
    <name type="scientific">Aggregatibacter actinomycetemcomitans</name>
    <name type="common">Actinobacillus actinomycetemcomitans</name>
    <name type="synonym">Haemophilus actinomycetemcomitans</name>
    <dbReference type="NCBI Taxonomy" id="714"/>
    <lineage>
        <taxon>Bacteria</taxon>
        <taxon>Pseudomonadati</taxon>
        <taxon>Pseudomonadota</taxon>
        <taxon>Gammaproteobacteria</taxon>
        <taxon>Pasteurellales</taxon>
        <taxon>Pasteurellaceae</taxon>
        <taxon>Aggregatibacter</taxon>
    </lineage>
</organism>
<protein>
    <recommendedName>
        <fullName>Leukotoxin export protein LtxD</fullName>
    </recommendedName>
</protein>
<evidence type="ECO:0000255" key="1"/>
<evidence type="ECO:0000269" key="2">
    <source>
    </source>
</evidence>
<evidence type="ECO:0000269" key="3">
    <source>
    </source>
</evidence>
<evidence type="ECO:0000303" key="4">
    <source>
    </source>
</evidence>
<evidence type="ECO:0000303" key="5">
    <source>
    </source>
</evidence>
<evidence type="ECO:0000303" key="6">
    <source>
    </source>
</evidence>
<evidence type="ECO:0000303" key="7">
    <source>
    </source>
</evidence>
<evidence type="ECO:0000303" key="8">
    <source>
    </source>
</evidence>
<evidence type="ECO:0000305" key="9"/>
<feature type="chain" id="PRO_0000201875" description="Leukotoxin export protein LtxD">
    <location>
        <begin position="1"/>
        <end position="477"/>
    </location>
</feature>
<feature type="transmembrane region" description="Helical" evidence="1">
    <location>
        <begin position="64"/>
        <end position="84"/>
    </location>
</feature>
<feature type="coiled-coil region" evidence="1">
    <location>
        <begin position="206"/>
        <end position="287"/>
    </location>
</feature>
<keyword id="KW-0997">Cell inner membrane</keyword>
<keyword id="KW-1003">Cell membrane</keyword>
<keyword id="KW-0175">Coiled coil</keyword>
<keyword id="KW-0472">Membrane</keyword>
<keyword id="KW-0812">Transmembrane</keyword>
<keyword id="KW-1133">Transmembrane helix</keyword>
<keyword id="KW-0813">Transport</keyword>
<name>LTXD_AGGAC</name>
<reference key="1">
    <citation type="journal article" date="1990" name="Nucleic Acids Res.">
        <title>Sequence of the lktD gene from Actinobacillus actinomycetemcomitans.</title>
        <authorList>
            <person name="Guthmiller J.M."/>
            <person name="Kraig E."/>
            <person name="Cagle M.P."/>
            <person name="Kolodrubetz D."/>
        </authorList>
    </citation>
    <scope>NUCLEOTIDE SEQUENCE [GENOMIC DNA]</scope>
    <source>
        <strain>JP2</strain>
    </source>
</reference>
<reference key="2">
    <citation type="journal article" date="1991" name="Microb. Pathog.">
        <title>Structure and function of the B and D genes of the Actinobacillus actinomycetemcomitans leukotoxin complex.</title>
        <authorList>
            <person name="Lally E.T."/>
            <person name="Golub E.E."/>
            <person name="Kieba I.R."/>
            <person name="Taichman N.S."/>
            <person name="Decker S."/>
            <person name="Berthold P."/>
            <person name="Gibson C.W."/>
            <person name="Demuth D.R."/>
            <person name="Rosenbloom J."/>
        </authorList>
    </citation>
    <scope>NUCLEOTIDE SEQUENCE [GENOMIC DNA]</scope>
</reference>
<reference key="3">
    <citation type="journal article" date="1994" name="Infect. Immun.">
        <title>Regulation of Actinobacillus actinomycetemcomitans leukotoxin expression: analysis of the promoter regions of leukotoxic and minimally leukotoxic strains.</title>
        <authorList>
            <person name="Brogan J.M."/>
            <person name="Lally E.T."/>
            <person name="Poulsen K."/>
            <person name="Kilian M."/>
            <person name="Demuth D.R."/>
        </authorList>
    </citation>
    <scope>INDUCTION</scope>
    <scope>GENE NAME</scope>
    <source>
        <strain>652</strain>
        <strain>JP2</strain>
    </source>
</reference>
<reference key="4">
    <citation type="journal article" date="1995" name="Microb. Pathog.">
        <title>Mutational analysis of the putative leukotoxin transport genes in Actinobacillus actinomycetemcomitans.</title>
        <authorList>
            <person name="Guthmiller J.M."/>
            <person name="Kolodrubetz D."/>
            <person name="Kraig E."/>
        </authorList>
    </citation>
    <scope>DISRUPTION PHENOTYPE</scope>
    <scope>FUNCTION</scope>
</reference>
<reference key="5">
    <citation type="journal article" date="2007" name="Gene">
        <title>TdeA, a TolC-like protein required for toxin and drug export in Aggregatibacter (Actinobacillus) actinomycetemcomitans.</title>
        <authorList>
            <person name="Crosby J.A."/>
            <person name="Kachlany S.C."/>
        </authorList>
    </citation>
    <scope>SUBUNIT</scope>
    <source>
        <strain>IDH781</strain>
    </source>
</reference>
<sequence length="477" mass="54651">MKTWLLALYDVLSRYKNVWNETWKIRKQLDSPVREKDENEFLPAHLELIETPVSNAPRFVSYSIMLFLTLAIIVSIFSNVEIIATASGKFALSGRSKEIKPIENSLVKHIFVKEGEYVKKGELLLKLTALGAEADTLKTKTSLSQAKLEEFRYKSLLEAVEKDQLPILDFSKIDLPFMTENDQKRVTLLIEEQFSTWQKQRHQKTLNLNKKEAEKLSYLARIKKYEGLINTEQVRLDDFRALYKEHAIAKHTVLDEENKYQDAINELEVYKASLMQVENEVLLAKEEQELVTQLFKNDILDKLKQATDNVNLLTFELDKNNQRQQVSEIRAPVSGTVQQLKVHTIDGVVTTAETLMVVVPEEDSLEVTALIQNKDIGFVKEGQEVVIKVEAFPYTRYGYLTGKVKNITLDAIEHPKLGLVFNTIIELDKKTLSTEEKEIPLSAGMEITAEIKTGMRSVISYLLSPLEESIDKSLRER</sequence>
<proteinExistence type="evidence at protein level"/>